<sequence length="285" mass="33215">MNENEKKLLSDIECLPNVDCKCDFGDIVRAFADYKINDELKFKVRQIALNLRPWRKGPFEILETFIDSEWQSFMKFNLLKPFMDLQGKKVADIGCNNGYYLFRMSNLGAKKLIGFDPGVRTFLQFRFLEHFLKSGVIYELLGVENLPDYGEKFDSIFCLGVLYHRSDPVRALKELKSSLNSGGEVFLDTMFIDGDDEICLFPRLSYAKISNIYFLPTIRTLQNWCERAKFKDFEILAVKATDENEQRKTDWIYGQSLGDFLDPFDKTRTIEGYPAPKRVYVRVKI</sequence>
<organism>
    <name type="scientific">Campylobacter hominis (strain ATCC BAA-381 / DSM 21671 / CCUG 45161 / LMG 19568 / NCTC 13146 / CH001A)</name>
    <dbReference type="NCBI Taxonomy" id="360107"/>
    <lineage>
        <taxon>Bacteria</taxon>
        <taxon>Pseudomonadati</taxon>
        <taxon>Campylobacterota</taxon>
        <taxon>Epsilonproteobacteria</taxon>
        <taxon>Campylobacterales</taxon>
        <taxon>Campylobacteraceae</taxon>
        <taxon>Campylobacter</taxon>
    </lineage>
</organism>
<reference key="1">
    <citation type="submission" date="2007-07" db="EMBL/GenBank/DDBJ databases">
        <title>Complete genome sequence of Campylobacter hominis ATCC BAA-381, a commensal isolated from the human gastrointestinal tract.</title>
        <authorList>
            <person name="Fouts D.E."/>
            <person name="Mongodin E.F."/>
            <person name="Puiu D."/>
            <person name="Sebastian Y."/>
            <person name="Miller W.G."/>
            <person name="Mandrell R.E."/>
            <person name="Nelson K.E."/>
        </authorList>
    </citation>
    <scope>NUCLEOTIDE SEQUENCE [LARGE SCALE GENOMIC DNA]</scope>
    <source>
        <strain>ATCC BAA-381 / DSM 21671 / CCUG 45161 / LMG 19568 / NCTC 13146 / CH001A</strain>
    </source>
</reference>
<protein>
    <recommendedName>
        <fullName evidence="1">tRNA U34 carboxymethyltransferase</fullName>
        <ecNumber evidence="1">2.5.1.-</ecNumber>
    </recommendedName>
</protein>
<dbReference type="EC" id="2.5.1.-" evidence="1"/>
<dbReference type="EMBL" id="CP000776">
    <property type="protein sequence ID" value="ABS51098.1"/>
    <property type="molecule type" value="Genomic_DNA"/>
</dbReference>
<dbReference type="RefSeq" id="WP_012108667.1">
    <property type="nucleotide sequence ID" value="NC_009714.1"/>
</dbReference>
<dbReference type="SMR" id="A7I1I7"/>
<dbReference type="STRING" id="360107.CHAB381_0811"/>
<dbReference type="KEGG" id="cha:CHAB381_0811"/>
<dbReference type="eggNOG" id="COG0500">
    <property type="taxonomic scope" value="Bacteria"/>
</dbReference>
<dbReference type="HOGENOM" id="CLU_052665_1_0_7"/>
<dbReference type="OrthoDB" id="9765084at2"/>
<dbReference type="Proteomes" id="UP000002407">
    <property type="component" value="Chromosome"/>
</dbReference>
<dbReference type="GO" id="GO:0016765">
    <property type="term" value="F:transferase activity, transferring alkyl or aryl (other than methyl) groups"/>
    <property type="evidence" value="ECO:0007669"/>
    <property type="project" value="InterPro"/>
</dbReference>
<dbReference type="GO" id="GO:0002098">
    <property type="term" value="P:tRNA wobble uridine modification"/>
    <property type="evidence" value="ECO:0007669"/>
    <property type="project" value="InterPro"/>
</dbReference>
<dbReference type="CDD" id="cd02440">
    <property type="entry name" value="AdoMet_MTases"/>
    <property type="match status" value="1"/>
</dbReference>
<dbReference type="Gene3D" id="3.40.50.150">
    <property type="entry name" value="Vaccinia Virus protein VP39"/>
    <property type="match status" value="1"/>
</dbReference>
<dbReference type="HAMAP" id="MF_01590">
    <property type="entry name" value="tRNA_carboxymethyltr_CmoB"/>
    <property type="match status" value="1"/>
</dbReference>
<dbReference type="InterPro" id="IPR010017">
    <property type="entry name" value="CmoB"/>
</dbReference>
<dbReference type="InterPro" id="IPR027555">
    <property type="entry name" value="Mo5U34_MeTrfas-like"/>
</dbReference>
<dbReference type="InterPro" id="IPR029063">
    <property type="entry name" value="SAM-dependent_MTases_sf"/>
</dbReference>
<dbReference type="NCBIfam" id="NF011650">
    <property type="entry name" value="PRK15068.1"/>
    <property type="match status" value="1"/>
</dbReference>
<dbReference type="NCBIfam" id="TIGR00452">
    <property type="entry name" value="tRNA 5-methoxyuridine(34)/uridine 5-oxyacetic acid(34) synthase CmoB"/>
    <property type="match status" value="1"/>
</dbReference>
<dbReference type="Pfam" id="PF08003">
    <property type="entry name" value="Methyltransf_9"/>
    <property type="match status" value="1"/>
</dbReference>
<dbReference type="SUPFAM" id="SSF53335">
    <property type="entry name" value="S-adenosyl-L-methionine-dependent methyltransferases"/>
    <property type="match status" value="1"/>
</dbReference>
<accession>A7I1I7</accession>
<keyword id="KW-1185">Reference proteome</keyword>
<keyword id="KW-0808">Transferase</keyword>
<keyword id="KW-0819">tRNA processing</keyword>
<evidence type="ECO:0000255" key="1">
    <source>
        <dbReference type="HAMAP-Rule" id="MF_01590"/>
    </source>
</evidence>
<gene>
    <name evidence="1" type="primary">cmoB</name>
    <name type="ordered locus">CHAB381_0811</name>
</gene>
<comment type="function">
    <text evidence="1">Catalyzes carboxymethyl transfer from carboxy-S-adenosyl-L-methionine (Cx-SAM) to 5-hydroxyuridine (ho5U) to form 5-carboxymethoxyuridine (cmo5U) at position 34 in tRNAs.</text>
</comment>
<comment type="catalytic activity">
    <reaction evidence="1">
        <text>carboxy-S-adenosyl-L-methionine + 5-hydroxyuridine(34) in tRNA = 5-carboxymethoxyuridine(34) in tRNA + S-adenosyl-L-homocysteine + H(+)</text>
        <dbReference type="Rhea" id="RHEA:52848"/>
        <dbReference type="Rhea" id="RHEA-COMP:13381"/>
        <dbReference type="Rhea" id="RHEA-COMP:13383"/>
        <dbReference type="ChEBI" id="CHEBI:15378"/>
        <dbReference type="ChEBI" id="CHEBI:57856"/>
        <dbReference type="ChEBI" id="CHEBI:134278"/>
        <dbReference type="ChEBI" id="CHEBI:136877"/>
        <dbReference type="ChEBI" id="CHEBI:136879"/>
    </reaction>
</comment>
<comment type="subunit">
    <text evidence="1">Homotetramer.</text>
</comment>
<comment type="similarity">
    <text evidence="1">Belongs to the class I-like SAM-binding methyltransferase superfamily. CmoB family.</text>
</comment>
<proteinExistence type="inferred from homology"/>
<name>CMOB_CAMHC</name>
<feature type="chain" id="PRO_0000313904" description="tRNA U34 carboxymethyltransferase">
    <location>
        <begin position="1"/>
        <end position="285"/>
    </location>
</feature>
<feature type="binding site" evidence="1">
    <location>
        <position position="56"/>
    </location>
    <ligand>
        <name>carboxy-S-adenosyl-L-methionine</name>
        <dbReference type="ChEBI" id="CHEBI:134278"/>
    </ligand>
</feature>
<feature type="binding site" evidence="1">
    <location>
        <position position="70"/>
    </location>
    <ligand>
        <name>carboxy-S-adenosyl-L-methionine</name>
        <dbReference type="ChEBI" id="CHEBI:134278"/>
    </ligand>
</feature>
<feature type="binding site" evidence="1">
    <location>
        <position position="75"/>
    </location>
    <ligand>
        <name>carboxy-S-adenosyl-L-methionine</name>
        <dbReference type="ChEBI" id="CHEBI:134278"/>
    </ligand>
</feature>
<feature type="binding site" evidence="1">
    <location>
        <position position="94"/>
    </location>
    <ligand>
        <name>carboxy-S-adenosyl-L-methionine</name>
        <dbReference type="ChEBI" id="CHEBI:134278"/>
    </ligand>
</feature>
<feature type="binding site" evidence="1">
    <location>
        <begin position="143"/>
        <end position="144"/>
    </location>
    <ligand>
        <name>carboxy-S-adenosyl-L-methionine</name>
        <dbReference type="ChEBI" id="CHEBI:134278"/>
    </ligand>
</feature>
<feature type="binding site" evidence="1">
    <location>
        <position position="163"/>
    </location>
    <ligand>
        <name>carboxy-S-adenosyl-L-methionine</name>
        <dbReference type="ChEBI" id="CHEBI:134278"/>
    </ligand>
</feature>
<feature type="binding site" evidence="1">
    <location>
        <position position="278"/>
    </location>
    <ligand>
        <name>carboxy-S-adenosyl-L-methionine</name>
        <dbReference type="ChEBI" id="CHEBI:134278"/>
    </ligand>
</feature>